<evidence type="ECO:0000256" key="1">
    <source>
        <dbReference type="SAM" id="MobiDB-lite"/>
    </source>
</evidence>
<feature type="chain" id="PRO_0000348109" description="Putative uncharacterized protein DDB_G0268590">
    <location>
        <begin position="1"/>
        <end position="584"/>
    </location>
</feature>
<feature type="region of interest" description="Disordered" evidence="1">
    <location>
        <begin position="123"/>
        <end position="156"/>
    </location>
</feature>
<feature type="region of interest" description="Disordered" evidence="1">
    <location>
        <begin position="209"/>
        <end position="264"/>
    </location>
</feature>
<feature type="region of interest" description="Disordered" evidence="1">
    <location>
        <begin position="355"/>
        <end position="479"/>
    </location>
</feature>
<feature type="compositionally biased region" description="Low complexity" evidence="1">
    <location>
        <begin position="237"/>
        <end position="260"/>
    </location>
</feature>
<feature type="compositionally biased region" description="Low complexity" evidence="1">
    <location>
        <begin position="366"/>
        <end position="376"/>
    </location>
</feature>
<feature type="compositionally biased region" description="Polar residues" evidence="1">
    <location>
        <begin position="377"/>
        <end position="388"/>
    </location>
</feature>
<feature type="compositionally biased region" description="Polar residues" evidence="1">
    <location>
        <begin position="395"/>
        <end position="419"/>
    </location>
</feature>
<feature type="compositionally biased region" description="Low complexity" evidence="1">
    <location>
        <begin position="425"/>
        <end position="479"/>
    </location>
</feature>
<sequence length="584" mass="63016">MLKKKGFSTSFPNEDFIDNQDTISNFKIKKEDFLLDFDDTYEQLNMTTPKGKIIIQGQENHSPFSLKSFSNLSFDYNRPLSPKTHILNIQDNNNNNYSPILKRVNKTISPSLVSSTNRFKNSLSCSSSSPSSSSSSSSSSPRLISTPPIISTPSSPMILTSSLDKFDEILSENEFMSLDNSVTSSSSSPSSSSCSSPIVIKTNATTSTKIVTPSSSPSSSYIEDAPSTPSPSKLFQSLSFKSPCSSPSSSSSSTTTPKSSINGGNIIKKQLFSNKRIQDIKIEKPSTKIDLHPSKLQIKSNLKIKPSLPYNSTEVTANTKTTTSTTTTTNTTIPTLSKNIIKRTSSVGLSPTLSSTQLVNKSSRKSISAATTTTITPHNNNSTMTTKTPSKRSLDTSNLSTPKSTSSTINKAFTTSTTPLKKPRMSMTPLSSSSSSSTTPSKFINPLPSSSSKTTTTITNSKRLSTLSKPSPITPITPTITKTTATTTTTTTTTPNKPTNKRLSTLVNTAQKPRKSYAPPPSSHISDELEQRIQEALLAEANGNYTGGSVLTHSSPQKVEQSEWSPIRKKSTLHDVHACTKKNY</sequence>
<dbReference type="EMBL" id="AAFI02000003">
    <property type="protein sequence ID" value="EAL73748.2"/>
    <property type="molecule type" value="Genomic_DNA"/>
</dbReference>
<dbReference type="RefSeq" id="XP_647638.2">
    <property type="nucleotide sequence ID" value="XM_642546.2"/>
</dbReference>
<dbReference type="FunCoup" id="Q55F95">
    <property type="interactions" value="99"/>
</dbReference>
<dbReference type="GlyGen" id="Q55F95">
    <property type="glycosylation" value="2 sites"/>
</dbReference>
<dbReference type="PaxDb" id="44689-DDB0252571"/>
<dbReference type="EnsemblProtists" id="EAL73748">
    <property type="protein sequence ID" value="EAL73748"/>
    <property type="gene ID" value="DDB_G0268590"/>
</dbReference>
<dbReference type="GeneID" id="8616453"/>
<dbReference type="KEGG" id="ddi:DDB_G0268590"/>
<dbReference type="dictyBase" id="DDB_G0268590"/>
<dbReference type="VEuPathDB" id="AmoebaDB:DDB_G0268590"/>
<dbReference type="eggNOG" id="ENOG502RSU6">
    <property type="taxonomic scope" value="Eukaryota"/>
</dbReference>
<dbReference type="HOGENOM" id="CLU_467295_0_0_1"/>
<dbReference type="InParanoid" id="Q55F95"/>
<dbReference type="OMA" id="KQCETTI"/>
<dbReference type="PRO" id="PR:Q55F95"/>
<dbReference type="Proteomes" id="UP000002195">
    <property type="component" value="Chromosome 1"/>
</dbReference>
<accession>Q55F95</accession>
<proteinExistence type="predicted"/>
<protein>
    <recommendedName>
        <fullName>Putative uncharacterized protein DDB_G0268590</fullName>
    </recommendedName>
</protein>
<reference key="1">
    <citation type="journal article" date="2005" name="Nature">
        <title>The genome of the social amoeba Dictyostelium discoideum.</title>
        <authorList>
            <person name="Eichinger L."/>
            <person name="Pachebat J.A."/>
            <person name="Gloeckner G."/>
            <person name="Rajandream M.A."/>
            <person name="Sucgang R."/>
            <person name="Berriman M."/>
            <person name="Song J."/>
            <person name="Olsen R."/>
            <person name="Szafranski K."/>
            <person name="Xu Q."/>
            <person name="Tunggal B."/>
            <person name="Kummerfeld S."/>
            <person name="Madera M."/>
            <person name="Konfortov B.A."/>
            <person name="Rivero F."/>
            <person name="Bankier A.T."/>
            <person name="Lehmann R."/>
            <person name="Hamlin N."/>
            <person name="Davies R."/>
            <person name="Gaudet P."/>
            <person name="Fey P."/>
            <person name="Pilcher K."/>
            <person name="Chen G."/>
            <person name="Saunders D."/>
            <person name="Sodergren E.J."/>
            <person name="Davis P."/>
            <person name="Kerhornou A."/>
            <person name="Nie X."/>
            <person name="Hall N."/>
            <person name="Anjard C."/>
            <person name="Hemphill L."/>
            <person name="Bason N."/>
            <person name="Farbrother P."/>
            <person name="Desany B."/>
            <person name="Just E."/>
            <person name="Morio T."/>
            <person name="Rost R."/>
            <person name="Churcher C.M."/>
            <person name="Cooper J."/>
            <person name="Haydock S."/>
            <person name="van Driessche N."/>
            <person name="Cronin A."/>
            <person name="Goodhead I."/>
            <person name="Muzny D.M."/>
            <person name="Mourier T."/>
            <person name="Pain A."/>
            <person name="Lu M."/>
            <person name="Harper D."/>
            <person name="Lindsay R."/>
            <person name="Hauser H."/>
            <person name="James K.D."/>
            <person name="Quiles M."/>
            <person name="Madan Babu M."/>
            <person name="Saito T."/>
            <person name="Buchrieser C."/>
            <person name="Wardroper A."/>
            <person name="Felder M."/>
            <person name="Thangavelu M."/>
            <person name="Johnson D."/>
            <person name="Knights A."/>
            <person name="Loulseged H."/>
            <person name="Mungall K.L."/>
            <person name="Oliver K."/>
            <person name="Price C."/>
            <person name="Quail M.A."/>
            <person name="Urushihara H."/>
            <person name="Hernandez J."/>
            <person name="Rabbinowitsch E."/>
            <person name="Steffen D."/>
            <person name="Sanders M."/>
            <person name="Ma J."/>
            <person name="Kohara Y."/>
            <person name="Sharp S."/>
            <person name="Simmonds M.N."/>
            <person name="Spiegler S."/>
            <person name="Tivey A."/>
            <person name="Sugano S."/>
            <person name="White B."/>
            <person name="Walker D."/>
            <person name="Woodward J.R."/>
            <person name="Winckler T."/>
            <person name="Tanaka Y."/>
            <person name="Shaulsky G."/>
            <person name="Schleicher M."/>
            <person name="Weinstock G.M."/>
            <person name="Rosenthal A."/>
            <person name="Cox E.C."/>
            <person name="Chisholm R.L."/>
            <person name="Gibbs R.A."/>
            <person name="Loomis W.F."/>
            <person name="Platzer M."/>
            <person name="Kay R.R."/>
            <person name="Williams J.G."/>
            <person name="Dear P.H."/>
            <person name="Noegel A.A."/>
            <person name="Barrell B.G."/>
            <person name="Kuspa A."/>
        </authorList>
    </citation>
    <scope>NUCLEOTIDE SEQUENCE [LARGE SCALE GENOMIC DNA]</scope>
    <source>
        <strain>AX4</strain>
    </source>
</reference>
<gene>
    <name type="ORF">DDB_G0268590</name>
</gene>
<name>Y6593_DICDI</name>
<keyword id="KW-1185">Reference proteome</keyword>
<organism>
    <name type="scientific">Dictyostelium discoideum</name>
    <name type="common">Social amoeba</name>
    <dbReference type="NCBI Taxonomy" id="44689"/>
    <lineage>
        <taxon>Eukaryota</taxon>
        <taxon>Amoebozoa</taxon>
        <taxon>Evosea</taxon>
        <taxon>Eumycetozoa</taxon>
        <taxon>Dictyostelia</taxon>
        <taxon>Dictyosteliales</taxon>
        <taxon>Dictyosteliaceae</taxon>
        <taxon>Dictyostelium</taxon>
    </lineage>
</organism>